<keyword id="KW-0963">Cytoplasm</keyword>
<keyword id="KW-0251">Elongation factor</keyword>
<keyword id="KW-0342">GTP-binding</keyword>
<keyword id="KW-0378">Hydrolase</keyword>
<keyword id="KW-0460">Magnesium</keyword>
<keyword id="KW-0479">Metal-binding</keyword>
<keyword id="KW-0547">Nucleotide-binding</keyword>
<keyword id="KW-0648">Protein biosynthesis</keyword>
<protein>
    <recommendedName>
        <fullName evidence="2">Elongation factor Tu</fullName>
        <shortName evidence="2">EF-Tu</shortName>
        <ecNumber evidence="2">3.6.5.3</ecNumber>
    </recommendedName>
</protein>
<evidence type="ECO:0000250" key="1"/>
<evidence type="ECO:0000255" key="2">
    <source>
        <dbReference type="HAMAP-Rule" id="MF_00118"/>
    </source>
</evidence>
<reference key="1">
    <citation type="journal article" date="2007" name="PLoS ONE">
        <title>Molecular correlates of host specialization in Staphylococcus aureus.</title>
        <authorList>
            <person name="Herron-Olson L."/>
            <person name="Fitzgerald J.R."/>
            <person name="Musser J.M."/>
            <person name="Kapur V."/>
        </authorList>
    </citation>
    <scope>NUCLEOTIDE SEQUENCE [LARGE SCALE GENOMIC DNA]</scope>
    <source>
        <strain>bovine RF122 / ET3-1</strain>
    </source>
</reference>
<proteinExistence type="inferred from homology"/>
<gene>
    <name evidence="2" type="primary">tuf</name>
    <name type="ordered locus">SAB0499</name>
</gene>
<name>EFTU_STAAB</name>
<feature type="chain" id="PRO_1000015751" description="Elongation factor Tu">
    <location>
        <begin position="1"/>
        <end position="394"/>
    </location>
</feature>
<feature type="domain" description="tr-type G">
    <location>
        <begin position="10"/>
        <end position="204"/>
    </location>
</feature>
<feature type="region of interest" description="G1" evidence="1">
    <location>
        <begin position="19"/>
        <end position="26"/>
    </location>
</feature>
<feature type="region of interest" description="G2" evidence="1">
    <location>
        <begin position="60"/>
        <end position="64"/>
    </location>
</feature>
<feature type="region of interest" description="G3" evidence="1">
    <location>
        <begin position="81"/>
        <end position="84"/>
    </location>
</feature>
<feature type="region of interest" description="G4" evidence="1">
    <location>
        <begin position="136"/>
        <end position="139"/>
    </location>
</feature>
<feature type="region of interest" description="G5" evidence="1">
    <location>
        <begin position="174"/>
        <end position="176"/>
    </location>
</feature>
<feature type="binding site" evidence="2">
    <location>
        <begin position="19"/>
        <end position="26"/>
    </location>
    <ligand>
        <name>GTP</name>
        <dbReference type="ChEBI" id="CHEBI:37565"/>
    </ligand>
</feature>
<feature type="binding site" evidence="2">
    <location>
        <position position="26"/>
    </location>
    <ligand>
        <name>Mg(2+)</name>
        <dbReference type="ChEBI" id="CHEBI:18420"/>
    </ligand>
</feature>
<feature type="binding site" evidence="2">
    <location>
        <begin position="81"/>
        <end position="85"/>
    </location>
    <ligand>
        <name>GTP</name>
        <dbReference type="ChEBI" id="CHEBI:37565"/>
    </ligand>
</feature>
<feature type="binding site" evidence="2">
    <location>
        <begin position="136"/>
        <end position="139"/>
    </location>
    <ligand>
        <name>GTP</name>
        <dbReference type="ChEBI" id="CHEBI:37565"/>
    </ligand>
</feature>
<organism>
    <name type="scientific">Staphylococcus aureus (strain bovine RF122 / ET3-1)</name>
    <dbReference type="NCBI Taxonomy" id="273036"/>
    <lineage>
        <taxon>Bacteria</taxon>
        <taxon>Bacillati</taxon>
        <taxon>Bacillota</taxon>
        <taxon>Bacilli</taxon>
        <taxon>Bacillales</taxon>
        <taxon>Staphylococcaceae</taxon>
        <taxon>Staphylococcus</taxon>
    </lineage>
</organism>
<sequence>MAKEKFDRSKEHANIGTIGHVDHGKTTLTAAIATVLAKNGDSVAQSYDMIDNAPEEKERGITINTSHIEYQTDKRHYAHVDCPGHADYVKNMITGAAQMDGGILVVSAADGPMPQTREHILLSRNVGVPALVVFLNKVDMVDDEELLELVEMEVRDLLSEYDFPGDDVPVIAGSALKALEGDAQYEEKILELMEAVDTYIPTPERDSDKPFMMPVEDVFSITGRGTVATGRVERGQIKVGEEVEIIGLHDTSKTTVTGVEMFRKLLDYAEAGDNIGALLRGVAREDVQRGQVLAAPGSITPHTEFKAEVYVLSKDEGGRHTPFFSNYRPQFYFRTTDVTGVVHLPEGTEMVMPGDNVEMTVELIAPIAIEDGTRFSIREGGRTVGSGVVTEIIK</sequence>
<accession>Q2YSB3</accession>
<dbReference type="EC" id="3.6.5.3" evidence="2"/>
<dbReference type="EMBL" id="AJ938182">
    <property type="protein sequence ID" value="CAI80187.1"/>
    <property type="molecule type" value="Genomic_DNA"/>
</dbReference>
<dbReference type="RefSeq" id="WP_001040568.1">
    <property type="nucleotide sequence ID" value="NC_007622.1"/>
</dbReference>
<dbReference type="SMR" id="Q2YSB3"/>
<dbReference type="KEGG" id="sab:SAB0499"/>
<dbReference type="HOGENOM" id="CLU_007265_0_0_9"/>
<dbReference type="GO" id="GO:0005829">
    <property type="term" value="C:cytosol"/>
    <property type="evidence" value="ECO:0007669"/>
    <property type="project" value="TreeGrafter"/>
</dbReference>
<dbReference type="GO" id="GO:0005525">
    <property type="term" value="F:GTP binding"/>
    <property type="evidence" value="ECO:0007669"/>
    <property type="project" value="UniProtKB-UniRule"/>
</dbReference>
<dbReference type="GO" id="GO:0003924">
    <property type="term" value="F:GTPase activity"/>
    <property type="evidence" value="ECO:0007669"/>
    <property type="project" value="InterPro"/>
</dbReference>
<dbReference type="GO" id="GO:0003746">
    <property type="term" value="F:translation elongation factor activity"/>
    <property type="evidence" value="ECO:0007669"/>
    <property type="project" value="UniProtKB-UniRule"/>
</dbReference>
<dbReference type="CDD" id="cd01884">
    <property type="entry name" value="EF_Tu"/>
    <property type="match status" value="1"/>
</dbReference>
<dbReference type="CDD" id="cd03697">
    <property type="entry name" value="EFTU_II"/>
    <property type="match status" value="1"/>
</dbReference>
<dbReference type="CDD" id="cd03707">
    <property type="entry name" value="EFTU_III"/>
    <property type="match status" value="1"/>
</dbReference>
<dbReference type="FunFam" id="2.40.30.10:FF:000001">
    <property type="entry name" value="Elongation factor Tu"/>
    <property type="match status" value="1"/>
</dbReference>
<dbReference type="FunFam" id="3.40.50.300:FF:000003">
    <property type="entry name" value="Elongation factor Tu"/>
    <property type="match status" value="1"/>
</dbReference>
<dbReference type="Gene3D" id="3.40.50.300">
    <property type="entry name" value="P-loop containing nucleotide triphosphate hydrolases"/>
    <property type="match status" value="1"/>
</dbReference>
<dbReference type="Gene3D" id="2.40.30.10">
    <property type="entry name" value="Translation factors"/>
    <property type="match status" value="2"/>
</dbReference>
<dbReference type="HAMAP" id="MF_00118_B">
    <property type="entry name" value="EF_Tu_B"/>
    <property type="match status" value="1"/>
</dbReference>
<dbReference type="InterPro" id="IPR041709">
    <property type="entry name" value="EF-Tu_GTP-bd"/>
</dbReference>
<dbReference type="InterPro" id="IPR050055">
    <property type="entry name" value="EF-Tu_GTPase"/>
</dbReference>
<dbReference type="InterPro" id="IPR004161">
    <property type="entry name" value="EFTu-like_2"/>
</dbReference>
<dbReference type="InterPro" id="IPR033720">
    <property type="entry name" value="EFTU_2"/>
</dbReference>
<dbReference type="InterPro" id="IPR031157">
    <property type="entry name" value="G_TR_CS"/>
</dbReference>
<dbReference type="InterPro" id="IPR027417">
    <property type="entry name" value="P-loop_NTPase"/>
</dbReference>
<dbReference type="InterPro" id="IPR005225">
    <property type="entry name" value="Small_GTP-bd"/>
</dbReference>
<dbReference type="InterPro" id="IPR000795">
    <property type="entry name" value="T_Tr_GTP-bd_dom"/>
</dbReference>
<dbReference type="InterPro" id="IPR009000">
    <property type="entry name" value="Transl_B-barrel_sf"/>
</dbReference>
<dbReference type="InterPro" id="IPR009001">
    <property type="entry name" value="Transl_elong_EF1A/Init_IF2_C"/>
</dbReference>
<dbReference type="InterPro" id="IPR004541">
    <property type="entry name" value="Transl_elong_EFTu/EF1A_bac/org"/>
</dbReference>
<dbReference type="InterPro" id="IPR004160">
    <property type="entry name" value="Transl_elong_EFTu/EF1A_C"/>
</dbReference>
<dbReference type="NCBIfam" id="TIGR00485">
    <property type="entry name" value="EF-Tu"/>
    <property type="match status" value="1"/>
</dbReference>
<dbReference type="NCBIfam" id="NF000766">
    <property type="entry name" value="PRK00049.1"/>
    <property type="match status" value="1"/>
</dbReference>
<dbReference type="NCBIfam" id="NF009372">
    <property type="entry name" value="PRK12735.1"/>
    <property type="match status" value="1"/>
</dbReference>
<dbReference type="NCBIfam" id="NF009373">
    <property type="entry name" value="PRK12736.1"/>
    <property type="match status" value="1"/>
</dbReference>
<dbReference type="NCBIfam" id="TIGR00231">
    <property type="entry name" value="small_GTP"/>
    <property type="match status" value="1"/>
</dbReference>
<dbReference type="PANTHER" id="PTHR43721:SF22">
    <property type="entry name" value="ELONGATION FACTOR TU, MITOCHONDRIAL"/>
    <property type="match status" value="1"/>
</dbReference>
<dbReference type="PANTHER" id="PTHR43721">
    <property type="entry name" value="ELONGATION FACTOR TU-RELATED"/>
    <property type="match status" value="1"/>
</dbReference>
<dbReference type="Pfam" id="PF00009">
    <property type="entry name" value="GTP_EFTU"/>
    <property type="match status" value="1"/>
</dbReference>
<dbReference type="Pfam" id="PF03144">
    <property type="entry name" value="GTP_EFTU_D2"/>
    <property type="match status" value="1"/>
</dbReference>
<dbReference type="Pfam" id="PF03143">
    <property type="entry name" value="GTP_EFTU_D3"/>
    <property type="match status" value="1"/>
</dbReference>
<dbReference type="PRINTS" id="PR00315">
    <property type="entry name" value="ELONGATNFCT"/>
</dbReference>
<dbReference type="SUPFAM" id="SSF50465">
    <property type="entry name" value="EF-Tu/eEF-1alpha/eIF2-gamma C-terminal domain"/>
    <property type="match status" value="1"/>
</dbReference>
<dbReference type="SUPFAM" id="SSF52540">
    <property type="entry name" value="P-loop containing nucleoside triphosphate hydrolases"/>
    <property type="match status" value="1"/>
</dbReference>
<dbReference type="SUPFAM" id="SSF50447">
    <property type="entry name" value="Translation proteins"/>
    <property type="match status" value="1"/>
</dbReference>
<dbReference type="PROSITE" id="PS00301">
    <property type="entry name" value="G_TR_1"/>
    <property type="match status" value="1"/>
</dbReference>
<dbReference type="PROSITE" id="PS51722">
    <property type="entry name" value="G_TR_2"/>
    <property type="match status" value="1"/>
</dbReference>
<comment type="function">
    <text evidence="2">GTP hydrolase that promotes the GTP-dependent binding of aminoacyl-tRNA to the A-site of ribosomes during protein biosynthesis.</text>
</comment>
<comment type="catalytic activity">
    <reaction evidence="2">
        <text>GTP + H2O = GDP + phosphate + H(+)</text>
        <dbReference type="Rhea" id="RHEA:19669"/>
        <dbReference type="ChEBI" id="CHEBI:15377"/>
        <dbReference type="ChEBI" id="CHEBI:15378"/>
        <dbReference type="ChEBI" id="CHEBI:37565"/>
        <dbReference type="ChEBI" id="CHEBI:43474"/>
        <dbReference type="ChEBI" id="CHEBI:58189"/>
        <dbReference type="EC" id="3.6.5.3"/>
    </reaction>
    <physiologicalReaction direction="left-to-right" evidence="2">
        <dbReference type="Rhea" id="RHEA:19670"/>
    </physiologicalReaction>
</comment>
<comment type="subunit">
    <text evidence="2">Monomer.</text>
</comment>
<comment type="subcellular location">
    <subcellularLocation>
        <location evidence="2">Cytoplasm</location>
    </subcellularLocation>
</comment>
<comment type="similarity">
    <text evidence="2">Belongs to the TRAFAC class translation factor GTPase superfamily. Classic translation factor GTPase family. EF-Tu/EF-1A subfamily.</text>
</comment>